<sequence length="648" mass="70696">MTPLLELKDIRRSYPAGDEQVEVLKGISLNIYAGEMVAIVGASGSGKSTLMNILGCLDKATSGTYRVAGQDIATLDADALAQLRREHFGFIFQRYHLLPHLTVEQNVEVPAVYAGLERKQRLLRAQELLQRLGLEDRTEYYPAQLSGGQQQRVSIARALMNGGQVILADEPTGALDSHSGEEVMAILHQLRDRGHTVIIVTHDPQVAAQAERVIEIRDGEIVRNPPAIEKVNVAGGTEPVVNTVSGWRQFVSGFNEALTMAWRALAANKMRTLLTMLGIIIGIASVVSIVVVGDAAKQMVLADIRSIGTNTIDVYPGKDFGDDDPQYQQALKYDDLIAIQKQPWVASATPAVSQNLRLRYNNVDVAASANGVSGDYFNVYGMTFSEGNTFNQEQLNGRAQVVVLDSNTRRQLFPHKADVVGEVILVGNMPARVIGVAEEKQSMFGSSKVLRVWLPYSTMSGRVMGQSWLNSITVRVKEGFDSAEAEQQLTRLLSLRHGKKDFFTWNMDGVLKTVEKTTRTLQLFLTLVAVISLVVGGIGVMNIMLVSVTERTREIGIRMAVGARASDVLQQFLIEAVLVCLVGGALGITLSLLIAFTLQLFLPGWEIGFSPLALLLAFLCSTATGILFGWLPARNAARLDPVDALARE</sequence>
<accession>Q83LR7</accession>
<accession>Q7C2C3</accession>
<reference key="1">
    <citation type="journal article" date="2002" name="Nucleic Acids Res.">
        <title>Genome sequence of Shigella flexneri 2a: insights into pathogenicity through comparison with genomes of Escherichia coli K12 and O157.</title>
        <authorList>
            <person name="Jin Q."/>
            <person name="Yuan Z."/>
            <person name="Xu J."/>
            <person name="Wang Y."/>
            <person name="Shen Y."/>
            <person name="Lu W."/>
            <person name="Wang J."/>
            <person name="Liu H."/>
            <person name="Yang J."/>
            <person name="Yang F."/>
            <person name="Zhang X."/>
            <person name="Zhang J."/>
            <person name="Yang G."/>
            <person name="Wu H."/>
            <person name="Qu D."/>
            <person name="Dong J."/>
            <person name="Sun L."/>
            <person name="Xue Y."/>
            <person name="Zhao A."/>
            <person name="Gao Y."/>
            <person name="Zhu J."/>
            <person name="Kan B."/>
            <person name="Ding K."/>
            <person name="Chen S."/>
            <person name="Cheng H."/>
            <person name="Yao Z."/>
            <person name="He B."/>
            <person name="Chen R."/>
            <person name="Ma D."/>
            <person name="Qiang B."/>
            <person name="Wen Y."/>
            <person name="Hou Y."/>
            <person name="Yu J."/>
        </authorList>
    </citation>
    <scope>NUCLEOTIDE SEQUENCE [LARGE SCALE GENOMIC DNA]</scope>
    <source>
        <strain>301 / Serotype 2a</strain>
    </source>
</reference>
<reference key="2">
    <citation type="journal article" date="2003" name="Infect. Immun.">
        <title>Complete genome sequence and comparative genomics of Shigella flexneri serotype 2a strain 2457T.</title>
        <authorList>
            <person name="Wei J."/>
            <person name="Goldberg M.B."/>
            <person name="Burland V."/>
            <person name="Venkatesan M.M."/>
            <person name="Deng W."/>
            <person name="Fournier G."/>
            <person name="Mayhew G.F."/>
            <person name="Plunkett G. III"/>
            <person name="Rose D.J."/>
            <person name="Darling A."/>
            <person name="Mau B."/>
            <person name="Perna N.T."/>
            <person name="Payne S.M."/>
            <person name="Runyen-Janecky L.J."/>
            <person name="Zhou S."/>
            <person name="Schwartz D.C."/>
            <person name="Blattner F.R."/>
        </authorList>
    </citation>
    <scope>NUCLEOTIDE SEQUENCE [LARGE SCALE GENOMIC DNA]</scope>
    <source>
        <strain>ATCC 700930 / 2457T / Serotype 2a</strain>
    </source>
</reference>
<gene>
    <name evidence="1" type="primary">macB</name>
    <name type="ordered locus">SF0839</name>
    <name type="ordered locus">S0879</name>
</gene>
<evidence type="ECO:0000255" key="1">
    <source>
        <dbReference type="HAMAP-Rule" id="MF_01720"/>
    </source>
</evidence>
<protein>
    <recommendedName>
        <fullName evidence="1">Macrolide export ATP-binding/permease protein MacB</fullName>
        <ecNumber evidence="1">7.6.2.-</ecNumber>
    </recommendedName>
</protein>
<keyword id="KW-0046">Antibiotic resistance</keyword>
<keyword id="KW-0067">ATP-binding</keyword>
<keyword id="KW-0997">Cell inner membrane</keyword>
<keyword id="KW-1003">Cell membrane</keyword>
<keyword id="KW-0472">Membrane</keyword>
<keyword id="KW-0547">Nucleotide-binding</keyword>
<keyword id="KW-1185">Reference proteome</keyword>
<keyword id="KW-1278">Translocase</keyword>
<keyword id="KW-0812">Transmembrane</keyword>
<keyword id="KW-1133">Transmembrane helix</keyword>
<keyword id="KW-0813">Transport</keyword>
<proteinExistence type="inferred from homology"/>
<feature type="chain" id="PRO_0000269981" description="Macrolide export ATP-binding/permease protein MacB">
    <location>
        <begin position="1"/>
        <end position="648"/>
    </location>
</feature>
<feature type="transmembrane region" description="Helical" evidence="1">
    <location>
        <begin position="273"/>
        <end position="293"/>
    </location>
</feature>
<feature type="transmembrane region" description="Helical" evidence="1">
    <location>
        <begin position="523"/>
        <end position="543"/>
    </location>
</feature>
<feature type="transmembrane region" description="Helical" evidence="1">
    <location>
        <begin position="576"/>
        <end position="596"/>
    </location>
</feature>
<feature type="transmembrane region" description="Helical" evidence="1">
    <location>
        <begin position="600"/>
        <end position="620"/>
    </location>
</feature>
<feature type="domain" description="ABC transporter" evidence="1">
    <location>
        <begin position="5"/>
        <end position="243"/>
    </location>
</feature>
<feature type="binding site" evidence="1">
    <location>
        <begin position="41"/>
        <end position="48"/>
    </location>
    <ligand>
        <name>ATP</name>
        <dbReference type="ChEBI" id="CHEBI:30616"/>
    </ligand>
</feature>
<comment type="function">
    <text evidence="1">Part of the tripartite efflux system MacAB-TolC. MacB is a non-canonical ABC transporter that contains transmembrane domains (TMD), which form a pore in the inner membrane, and an ATP-binding domain (NBD), which is responsible for energy generation. Confers resistance against macrolides.</text>
</comment>
<comment type="subunit">
    <text evidence="1">Homodimer. Part of the tripartite efflux system MacAB-TolC, which is composed of an inner membrane transporter, MacB, a periplasmic membrane fusion protein, MacA, and an outer membrane component, TolC. The complex forms a large protein conduit and can translocate molecules across both the inner and outer membranes. Interacts with MacA.</text>
</comment>
<comment type="subcellular location">
    <subcellularLocation>
        <location evidence="1">Cell inner membrane</location>
        <topology evidence="1">Multi-pass membrane protein</topology>
    </subcellularLocation>
</comment>
<comment type="similarity">
    <text evidence="1">Belongs to the ABC transporter superfamily. Macrolide exporter (TC 3.A.1.122) family.</text>
</comment>
<name>MACB_SHIFL</name>
<organism>
    <name type="scientific">Shigella flexneri</name>
    <dbReference type="NCBI Taxonomy" id="623"/>
    <lineage>
        <taxon>Bacteria</taxon>
        <taxon>Pseudomonadati</taxon>
        <taxon>Pseudomonadota</taxon>
        <taxon>Gammaproteobacteria</taxon>
        <taxon>Enterobacterales</taxon>
        <taxon>Enterobacteriaceae</taxon>
        <taxon>Shigella</taxon>
    </lineage>
</organism>
<dbReference type="EC" id="7.6.2.-" evidence="1"/>
<dbReference type="EMBL" id="AE005674">
    <property type="protein sequence ID" value="AAN42472.1"/>
    <property type="molecule type" value="Genomic_DNA"/>
</dbReference>
<dbReference type="EMBL" id="AE014073">
    <property type="protein sequence ID" value="AAP16344.1"/>
    <property type="molecule type" value="Genomic_DNA"/>
</dbReference>
<dbReference type="RefSeq" id="WP_000188161.1">
    <property type="nucleotide sequence ID" value="NZ_WPGW01000037.1"/>
</dbReference>
<dbReference type="SMR" id="Q83LR7"/>
<dbReference type="STRING" id="198214.SF0839"/>
<dbReference type="PaxDb" id="198214-SF0839"/>
<dbReference type="KEGG" id="sfl:SF0839"/>
<dbReference type="KEGG" id="sfx:S0879"/>
<dbReference type="PATRIC" id="fig|198214.7.peg.968"/>
<dbReference type="HOGENOM" id="CLU_000604_78_3_6"/>
<dbReference type="Proteomes" id="UP000001006">
    <property type="component" value="Chromosome"/>
</dbReference>
<dbReference type="Proteomes" id="UP000002673">
    <property type="component" value="Chromosome"/>
</dbReference>
<dbReference type="GO" id="GO:0005886">
    <property type="term" value="C:plasma membrane"/>
    <property type="evidence" value="ECO:0007669"/>
    <property type="project" value="UniProtKB-SubCell"/>
</dbReference>
<dbReference type="GO" id="GO:0005524">
    <property type="term" value="F:ATP binding"/>
    <property type="evidence" value="ECO:0007669"/>
    <property type="project" value="UniProtKB-KW"/>
</dbReference>
<dbReference type="GO" id="GO:0016887">
    <property type="term" value="F:ATP hydrolysis activity"/>
    <property type="evidence" value="ECO:0007669"/>
    <property type="project" value="InterPro"/>
</dbReference>
<dbReference type="GO" id="GO:0022857">
    <property type="term" value="F:transmembrane transporter activity"/>
    <property type="evidence" value="ECO:0007669"/>
    <property type="project" value="TreeGrafter"/>
</dbReference>
<dbReference type="GO" id="GO:0046677">
    <property type="term" value="P:response to antibiotic"/>
    <property type="evidence" value="ECO:0007669"/>
    <property type="project" value="UniProtKB-KW"/>
</dbReference>
<dbReference type="CDD" id="cd03255">
    <property type="entry name" value="ABC_MJ0796_LolCDE_FtsE"/>
    <property type="match status" value="1"/>
</dbReference>
<dbReference type="FunFam" id="3.40.50.300:FF:000032">
    <property type="entry name" value="Export ABC transporter ATP-binding protein"/>
    <property type="match status" value="1"/>
</dbReference>
<dbReference type="Gene3D" id="3.40.50.300">
    <property type="entry name" value="P-loop containing nucleotide triphosphate hydrolases"/>
    <property type="match status" value="1"/>
</dbReference>
<dbReference type="InterPro" id="IPR003593">
    <property type="entry name" value="AAA+_ATPase"/>
</dbReference>
<dbReference type="InterPro" id="IPR003838">
    <property type="entry name" value="ABC3_permease_C"/>
</dbReference>
<dbReference type="InterPro" id="IPR003439">
    <property type="entry name" value="ABC_transporter-like_ATP-bd"/>
</dbReference>
<dbReference type="InterPro" id="IPR017871">
    <property type="entry name" value="ABC_transporter-like_CS"/>
</dbReference>
<dbReference type="InterPro" id="IPR017911">
    <property type="entry name" value="MacB-like_ATP-bd"/>
</dbReference>
<dbReference type="InterPro" id="IPR025857">
    <property type="entry name" value="MacB_PCD"/>
</dbReference>
<dbReference type="InterPro" id="IPR050250">
    <property type="entry name" value="Macrolide_Exporter_MacB"/>
</dbReference>
<dbReference type="InterPro" id="IPR027417">
    <property type="entry name" value="P-loop_NTPase"/>
</dbReference>
<dbReference type="NCBIfam" id="NF007826">
    <property type="entry name" value="PRK10535.1"/>
    <property type="match status" value="1"/>
</dbReference>
<dbReference type="PANTHER" id="PTHR30572:SF7">
    <property type="entry name" value="MACROLIDE EXPORT ATP-BINDING_PERMEASE PROTEIN MACB"/>
    <property type="match status" value="1"/>
</dbReference>
<dbReference type="PANTHER" id="PTHR30572">
    <property type="entry name" value="MEMBRANE COMPONENT OF TRANSPORTER-RELATED"/>
    <property type="match status" value="1"/>
</dbReference>
<dbReference type="Pfam" id="PF00005">
    <property type="entry name" value="ABC_tran"/>
    <property type="match status" value="1"/>
</dbReference>
<dbReference type="Pfam" id="PF02687">
    <property type="entry name" value="FtsX"/>
    <property type="match status" value="1"/>
</dbReference>
<dbReference type="Pfam" id="PF12704">
    <property type="entry name" value="MacB_PCD"/>
    <property type="match status" value="1"/>
</dbReference>
<dbReference type="SMART" id="SM00382">
    <property type="entry name" value="AAA"/>
    <property type="match status" value="1"/>
</dbReference>
<dbReference type="SUPFAM" id="SSF52540">
    <property type="entry name" value="P-loop containing nucleoside triphosphate hydrolases"/>
    <property type="match status" value="1"/>
</dbReference>
<dbReference type="PROSITE" id="PS00211">
    <property type="entry name" value="ABC_TRANSPORTER_1"/>
    <property type="match status" value="1"/>
</dbReference>
<dbReference type="PROSITE" id="PS50893">
    <property type="entry name" value="ABC_TRANSPORTER_2"/>
    <property type="match status" value="1"/>
</dbReference>
<dbReference type="PROSITE" id="PS51267">
    <property type="entry name" value="MACB"/>
    <property type="match status" value="1"/>
</dbReference>